<accession>A7HZG0</accession>
<reference key="1">
    <citation type="submission" date="2007-07" db="EMBL/GenBank/DDBJ databases">
        <title>Complete genome sequence of Campylobacter hominis ATCC BAA-381, a commensal isolated from the human gastrointestinal tract.</title>
        <authorList>
            <person name="Fouts D.E."/>
            <person name="Mongodin E.F."/>
            <person name="Puiu D."/>
            <person name="Sebastian Y."/>
            <person name="Miller W.G."/>
            <person name="Mandrell R.E."/>
            <person name="Nelson K.E."/>
        </authorList>
    </citation>
    <scope>NUCLEOTIDE SEQUENCE [LARGE SCALE GENOMIC DNA]</scope>
    <source>
        <strain>ATCC BAA-381 / DSM 21671 / CCUG 45161 / LMG 19568 / NCTC 13146 / CH001A</strain>
    </source>
</reference>
<sequence length="156" mass="16834">MNTIEGKLTLTGKEKIAIINARFNHIITDRLVEGAKDAFMRHGGDEKNLSLILVPGAYEIPFALDLAIKSSKFDAICCVGAIIRGSTPHFDYVAAETAKGIAQTTLKYGIPVSFGVLTTENIEQAIERAGSKAGNKGFEAMSSVIEMLNLYKNLKA</sequence>
<dbReference type="EC" id="2.5.1.78" evidence="1"/>
<dbReference type="EMBL" id="CP000776">
    <property type="protein sequence ID" value="ABS51480.1"/>
    <property type="molecule type" value="Genomic_DNA"/>
</dbReference>
<dbReference type="RefSeq" id="WP_011991498.1">
    <property type="nucleotide sequence ID" value="NC_009714.1"/>
</dbReference>
<dbReference type="SMR" id="A7HZG0"/>
<dbReference type="STRING" id="360107.CHAB381_0029"/>
<dbReference type="KEGG" id="cha:CHAB381_0029"/>
<dbReference type="eggNOG" id="COG0054">
    <property type="taxonomic scope" value="Bacteria"/>
</dbReference>
<dbReference type="HOGENOM" id="CLU_089358_1_1_7"/>
<dbReference type="OrthoDB" id="9809709at2"/>
<dbReference type="UniPathway" id="UPA00275">
    <property type="reaction ID" value="UER00404"/>
</dbReference>
<dbReference type="Proteomes" id="UP000002407">
    <property type="component" value="Chromosome"/>
</dbReference>
<dbReference type="GO" id="GO:0005829">
    <property type="term" value="C:cytosol"/>
    <property type="evidence" value="ECO:0007669"/>
    <property type="project" value="TreeGrafter"/>
</dbReference>
<dbReference type="GO" id="GO:0009349">
    <property type="term" value="C:riboflavin synthase complex"/>
    <property type="evidence" value="ECO:0007669"/>
    <property type="project" value="InterPro"/>
</dbReference>
<dbReference type="GO" id="GO:0000906">
    <property type="term" value="F:6,7-dimethyl-8-ribityllumazine synthase activity"/>
    <property type="evidence" value="ECO:0007669"/>
    <property type="project" value="UniProtKB-UniRule"/>
</dbReference>
<dbReference type="GO" id="GO:0009231">
    <property type="term" value="P:riboflavin biosynthetic process"/>
    <property type="evidence" value="ECO:0007669"/>
    <property type="project" value="UniProtKB-UniRule"/>
</dbReference>
<dbReference type="CDD" id="cd09209">
    <property type="entry name" value="Lumazine_synthase-I"/>
    <property type="match status" value="1"/>
</dbReference>
<dbReference type="FunFam" id="3.40.50.960:FF:000001">
    <property type="entry name" value="6,7-dimethyl-8-ribityllumazine synthase"/>
    <property type="match status" value="1"/>
</dbReference>
<dbReference type="Gene3D" id="3.40.50.960">
    <property type="entry name" value="Lumazine/riboflavin synthase"/>
    <property type="match status" value="1"/>
</dbReference>
<dbReference type="HAMAP" id="MF_00178">
    <property type="entry name" value="Lumazine_synth"/>
    <property type="match status" value="1"/>
</dbReference>
<dbReference type="InterPro" id="IPR034964">
    <property type="entry name" value="LS"/>
</dbReference>
<dbReference type="InterPro" id="IPR002180">
    <property type="entry name" value="LS/RS"/>
</dbReference>
<dbReference type="InterPro" id="IPR036467">
    <property type="entry name" value="LS/RS_sf"/>
</dbReference>
<dbReference type="NCBIfam" id="TIGR00114">
    <property type="entry name" value="lumazine-synth"/>
    <property type="match status" value="1"/>
</dbReference>
<dbReference type="PANTHER" id="PTHR21058:SF0">
    <property type="entry name" value="6,7-DIMETHYL-8-RIBITYLLUMAZINE SYNTHASE"/>
    <property type="match status" value="1"/>
</dbReference>
<dbReference type="PANTHER" id="PTHR21058">
    <property type="entry name" value="6,7-DIMETHYL-8-RIBITYLLUMAZINE SYNTHASE DMRL SYNTHASE LUMAZINE SYNTHASE"/>
    <property type="match status" value="1"/>
</dbReference>
<dbReference type="Pfam" id="PF00885">
    <property type="entry name" value="DMRL_synthase"/>
    <property type="match status" value="1"/>
</dbReference>
<dbReference type="SUPFAM" id="SSF52121">
    <property type="entry name" value="Lumazine synthase"/>
    <property type="match status" value="1"/>
</dbReference>
<keyword id="KW-1185">Reference proteome</keyword>
<keyword id="KW-0686">Riboflavin biosynthesis</keyword>
<keyword id="KW-0808">Transferase</keyword>
<organism>
    <name type="scientific">Campylobacter hominis (strain ATCC BAA-381 / DSM 21671 / CCUG 45161 / LMG 19568 / NCTC 13146 / CH001A)</name>
    <dbReference type="NCBI Taxonomy" id="360107"/>
    <lineage>
        <taxon>Bacteria</taxon>
        <taxon>Pseudomonadati</taxon>
        <taxon>Campylobacterota</taxon>
        <taxon>Epsilonproteobacteria</taxon>
        <taxon>Campylobacterales</taxon>
        <taxon>Campylobacteraceae</taxon>
        <taxon>Campylobacter</taxon>
    </lineage>
</organism>
<proteinExistence type="inferred from homology"/>
<name>RISB_CAMHC</name>
<protein>
    <recommendedName>
        <fullName evidence="1">6,7-dimethyl-8-ribityllumazine synthase</fullName>
        <shortName evidence="1">DMRL synthase</shortName>
        <shortName evidence="1">LS</shortName>
        <shortName evidence="1">Lumazine synthase</shortName>
        <ecNumber evidence="1">2.5.1.78</ecNumber>
    </recommendedName>
</protein>
<gene>
    <name evidence="1" type="primary">ribH</name>
    <name type="ordered locus">CHAB381_0029</name>
</gene>
<evidence type="ECO:0000255" key="1">
    <source>
        <dbReference type="HAMAP-Rule" id="MF_00178"/>
    </source>
</evidence>
<feature type="chain" id="PRO_1000040390" description="6,7-dimethyl-8-ribityllumazine synthase">
    <location>
        <begin position="1"/>
        <end position="156"/>
    </location>
</feature>
<feature type="active site" description="Proton donor" evidence="1">
    <location>
        <position position="89"/>
    </location>
</feature>
<feature type="binding site" evidence="1">
    <location>
        <position position="23"/>
    </location>
    <ligand>
        <name>5-amino-6-(D-ribitylamino)uracil</name>
        <dbReference type="ChEBI" id="CHEBI:15934"/>
    </ligand>
</feature>
<feature type="binding site" evidence="1">
    <location>
        <begin position="57"/>
        <end position="59"/>
    </location>
    <ligand>
        <name>5-amino-6-(D-ribitylamino)uracil</name>
        <dbReference type="ChEBI" id="CHEBI:15934"/>
    </ligand>
</feature>
<feature type="binding site" evidence="1">
    <location>
        <begin position="81"/>
        <end position="83"/>
    </location>
    <ligand>
        <name>5-amino-6-(D-ribitylamino)uracil</name>
        <dbReference type="ChEBI" id="CHEBI:15934"/>
    </ligand>
</feature>
<feature type="binding site" evidence="1">
    <location>
        <begin position="86"/>
        <end position="87"/>
    </location>
    <ligand>
        <name>(2S)-2-hydroxy-3-oxobutyl phosphate</name>
        <dbReference type="ChEBI" id="CHEBI:58830"/>
    </ligand>
</feature>
<feature type="binding site" evidence="1">
    <location>
        <position position="114"/>
    </location>
    <ligand>
        <name>5-amino-6-(D-ribitylamino)uracil</name>
        <dbReference type="ChEBI" id="CHEBI:15934"/>
    </ligand>
</feature>
<feature type="binding site" evidence="1">
    <location>
        <position position="128"/>
    </location>
    <ligand>
        <name>(2S)-2-hydroxy-3-oxobutyl phosphate</name>
        <dbReference type="ChEBI" id="CHEBI:58830"/>
    </ligand>
</feature>
<comment type="function">
    <text evidence="1">Catalyzes the formation of 6,7-dimethyl-8-ribityllumazine by condensation of 5-amino-6-(D-ribitylamino)uracil with 3,4-dihydroxy-2-butanone 4-phosphate. This is the penultimate step in the biosynthesis of riboflavin.</text>
</comment>
<comment type="catalytic activity">
    <reaction evidence="1">
        <text>(2S)-2-hydroxy-3-oxobutyl phosphate + 5-amino-6-(D-ribitylamino)uracil = 6,7-dimethyl-8-(1-D-ribityl)lumazine + phosphate + 2 H2O + H(+)</text>
        <dbReference type="Rhea" id="RHEA:26152"/>
        <dbReference type="ChEBI" id="CHEBI:15377"/>
        <dbReference type="ChEBI" id="CHEBI:15378"/>
        <dbReference type="ChEBI" id="CHEBI:15934"/>
        <dbReference type="ChEBI" id="CHEBI:43474"/>
        <dbReference type="ChEBI" id="CHEBI:58201"/>
        <dbReference type="ChEBI" id="CHEBI:58830"/>
        <dbReference type="EC" id="2.5.1.78"/>
    </reaction>
</comment>
<comment type="pathway">
    <text evidence="1">Cofactor biosynthesis; riboflavin biosynthesis; riboflavin from 2-hydroxy-3-oxobutyl phosphate and 5-amino-6-(D-ribitylamino)uracil: step 1/2.</text>
</comment>
<comment type="similarity">
    <text evidence="1">Belongs to the DMRL synthase family.</text>
</comment>